<feature type="chain" id="PRO_1000133901" description="Bifunctional glutamine synthetase adenylyltransferase/adenylyl-removing enzyme">
    <location>
        <begin position="1"/>
        <end position="946"/>
    </location>
</feature>
<feature type="region of interest" description="Adenylyl removase" evidence="1">
    <location>
        <begin position="1"/>
        <end position="440"/>
    </location>
</feature>
<feature type="region of interest" description="Adenylyl transferase" evidence="1">
    <location>
        <begin position="449"/>
        <end position="946"/>
    </location>
</feature>
<comment type="function">
    <text evidence="1">Involved in the regulation of glutamine synthetase GlnA, a key enzyme in the process to assimilate ammonia. When cellular nitrogen levels are high, the C-terminal adenylyl transferase (AT) inactivates GlnA by covalent transfer of an adenylyl group from ATP to specific tyrosine residue of GlnA, thus reducing its activity. Conversely, when nitrogen levels are low, the N-terminal adenylyl removase (AR) activates GlnA by removing the adenylyl group by phosphorolysis, increasing its activity. The regulatory region of GlnE binds the signal transduction protein PII (GlnB) which indicates the nitrogen status of the cell.</text>
</comment>
<comment type="catalytic activity">
    <reaction evidence="1">
        <text>[glutamine synthetase]-O(4)-(5'-adenylyl)-L-tyrosine + phosphate = [glutamine synthetase]-L-tyrosine + ADP</text>
        <dbReference type="Rhea" id="RHEA:43716"/>
        <dbReference type="Rhea" id="RHEA-COMP:10660"/>
        <dbReference type="Rhea" id="RHEA-COMP:10661"/>
        <dbReference type="ChEBI" id="CHEBI:43474"/>
        <dbReference type="ChEBI" id="CHEBI:46858"/>
        <dbReference type="ChEBI" id="CHEBI:83624"/>
        <dbReference type="ChEBI" id="CHEBI:456216"/>
        <dbReference type="EC" id="2.7.7.89"/>
    </reaction>
</comment>
<comment type="catalytic activity">
    <reaction evidence="1">
        <text>[glutamine synthetase]-L-tyrosine + ATP = [glutamine synthetase]-O(4)-(5'-adenylyl)-L-tyrosine + diphosphate</text>
        <dbReference type="Rhea" id="RHEA:18589"/>
        <dbReference type="Rhea" id="RHEA-COMP:10660"/>
        <dbReference type="Rhea" id="RHEA-COMP:10661"/>
        <dbReference type="ChEBI" id="CHEBI:30616"/>
        <dbReference type="ChEBI" id="CHEBI:33019"/>
        <dbReference type="ChEBI" id="CHEBI:46858"/>
        <dbReference type="ChEBI" id="CHEBI:83624"/>
        <dbReference type="EC" id="2.7.7.42"/>
    </reaction>
</comment>
<comment type="cofactor">
    <cofactor evidence="1">
        <name>Mg(2+)</name>
        <dbReference type="ChEBI" id="CHEBI:18420"/>
    </cofactor>
</comment>
<comment type="similarity">
    <text evidence="1">Belongs to the GlnE family.</text>
</comment>
<evidence type="ECO:0000255" key="1">
    <source>
        <dbReference type="HAMAP-Rule" id="MF_00802"/>
    </source>
</evidence>
<protein>
    <recommendedName>
        <fullName evidence="1">Bifunctional glutamine synthetase adenylyltransferase/adenylyl-removing enzyme</fullName>
    </recommendedName>
    <alternativeName>
        <fullName evidence="1">ATP:glutamine synthetase adenylyltransferase</fullName>
    </alternativeName>
    <alternativeName>
        <fullName evidence="1">ATase</fullName>
    </alternativeName>
    <domain>
        <recommendedName>
            <fullName evidence="1">Glutamine synthetase adenylyl-L-tyrosine phosphorylase</fullName>
            <ecNumber evidence="1">2.7.7.89</ecNumber>
        </recommendedName>
        <alternativeName>
            <fullName evidence="1">Adenylyl removase</fullName>
            <shortName evidence="1">AR</shortName>
            <shortName evidence="1">AT-N</shortName>
        </alternativeName>
    </domain>
    <domain>
        <recommendedName>
            <fullName evidence="1">Glutamine synthetase adenylyl transferase</fullName>
            <ecNumber evidence="1">2.7.7.42</ecNumber>
        </recommendedName>
        <alternativeName>
            <fullName evidence="1">Adenylyl transferase</fullName>
            <shortName evidence="1">AT</shortName>
            <shortName evidence="1">AT-C</shortName>
        </alternativeName>
    </domain>
</protein>
<gene>
    <name evidence="1" type="primary">glnE</name>
    <name type="ordered locus">ECDH10B_3228</name>
</gene>
<reference key="1">
    <citation type="journal article" date="2008" name="J. Bacteriol.">
        <title>The complete genome sequence of Escherichia coli DH10B: insights into the biology of a laboratory workhorse.</title>
        <authorList>
            <person name="Durfee T."/>
            <person name="Nelson R."/>
            <person name="Baldwin S."/>
            <person name="Plunkett G. III"/>
            <person name="Burland V."/>
            <person name="Mau B."/>
            <person name="Petrosino J.F."/>
            <person name="Qin X."/>
            <person name="Muzny D.M."/>
            <person name="Ayele M."/>
            <person name="Gibbs R.A."/>
            <person name="Csorgo B."/>
            <person name="Posfai G."/>
            <person name="Weinstock G.M."/>
            <person name="Blattner F.R."/>
        </authorList>
    </citation>
    <scope>NUCLEOTIDE SEQUENCE [LARGE SCALE GENOMIC DNA]</scope>
    <source>
        <strain>K12 / DH10B</strain>
    </source>
</reference>
<proteinExistence type="inferred from homology"/>
<sequence>MKPLSSPLQQYWQTVVERLPEPLAEESLSAQAKSVLTFSDFVQDSVIAHPEWLTELESQPPQADEWQHYAAWLQEALCNVSDEAGLMRELRLFRRRIMVRIAWAQTLALVTEESILQQLSYLAETLIVAARDWLYDACCREWGTPCNAQGEAQPLLILGMGKLGGGELNFSSDIDLIFAWPEHGCTQGGRRELDNAQFFTRMGQRLIKVLDQPTQDGFVYRVDMRLRPFGESGPLVLSFAALEDYYQEQGRDWERYAMVKARIMGDSEGVYANELRAMLRPFVFRRYIDFSVIQSLRNMKGMIAREVRRRGLTDNIKLGAGGIREIEFIVQVFQLIRGGREPSLQSRSLLPTLSAIAELHLLSENDAEQLRVAYLFLRRLENLLQSINDEQTQTLPSDELNRARLAWAMDFADWPQLTGALTAHMTNVRRVFNELIGDDESETQEESLSEQWRELWQDALQEDDTTPVLAHLSEDDRKQVLTLIADFRKELDKRTIGPRGRQVLDHLMPHLLSDVCAREDAAVTLSRITALLVGIVTRTTYLELLSEFPAALKHLISLCAASPMIASQLARYPLLLDELLDPNTLYQPTATDAYRDELRQYLLRVPEDDEEQQLEALRQFKQAQLLRIAAADIAGTLPVMKVSDHLTWLAEAMIDAVVQQAWVQMVARYGKPNHLNEREGRGFAVVGYGKLGGWELGYSSDLDLIFLHDCPMDAMTDGEREIDGRQFYLRLAQRIMHLFSTRTSSGILYEVDARLRPSGAAGMLVTSAEAFADYQKNEAWTWEHQALVRARVVYGDPQLTAHFDAVRREIMTLPREGKTLQTEVREMREKMRAHLGNKHRDRFDIKADEGGITDIEFITQYLVLRYAHEKPKLTRWSDNVRILELLAQNDIMEEQEAMALTRAYTTLRDELHHLALQELPGHVSEDCFTAERELVRASWQKWLVEE</sequence>
<organism>
    <name type="scientific">Escherichia coli (strain K12 / DH10B)</name>
    <dbReference type="NCBI Taxonomy" id="316385"/>
    <lineage>
        <taxon>Bacteria</taxon>
        <taxon>Pseudomonadati</taxon>
        <taxon>Pseudomonadota</taxon>
        <taxon>Gammaproteobacteria</taxon>
        <taxon>Enterobacterales</taxon>
        <taxon>Enterobacteriaceae</taxon>
        <taxon>Escherichia</taxon>
    </lineage>
</organism>
<dbReference type="EC" id="2.7.7.89" evidence="1"/>
<dbReference type="EC" id="2.7.7.42" evidence="1"/>
<dbReference type="EMBL" id="CP000948">
    <property type="protein sequence ID" value="ACB04138.1"/>
    <property type="molecule type" value="Genomic_DNA"/>
</dbReference>
<dbReference type="RefSeq" id="WP_001301081.1">
    <property type="nucleotide sequence ID" value="NC_010473.1"/>
</dbReference>
<dbReference type="SMR" id="B1XG58"/>
<dbReference type="KEGG" id="ecd:ECDH10B_3228"/>
<dbReference type="HOGENOM" id="CLU_006233_0_1_6"/>
<dbReference type="GO" id="GO:0005829">
    <property type="term" value="C:cytosol"/>
    <property type="evidence" value="ECO:0007669"/>
    <property type="project" value="TreeGrafter"/>
</dbReference>
<dbReference type="GO" id="GO:0008882">
    <property type="term" value="F:[glutamate-ammonia-ligase] adenylyltransferase activity"/>
    <property type="evidence" value="ECO:0007669"/>
    <property type="project" value="UniProtKB-UniRule"/>
</dbReference>
<dbReference type="GO" id="GO:0047388">
    <property type="term" value="F:[glutamine synthetase]-adenylyl-L-tyrosine phosphorylase activity"/>
    <property type="evidence" value="ECO:0007669"/>
    <property type="project" value="UniProtKB-EC"/>
</dbReference>
<dbReference type="GO" id="GO:0005524">
    <property type="term" value="F:ATP binding"/>
    <property type="evidence" value="ECO:0007669"/>
    <property type="project" value="UniProtKB-UniRule"/>
</dbReference>
<dbReference type="GO" id="GO:0000287">
    <property type="term" value="F:magnesium ion binding"/>
    <property type="evidence" value="ECO:0007669"/>
    <property type="project" value="UniProtKB-UniRule"/>
</dbReference>
<dbReference type="GO" id="GO:0000820">
    <property type="term" value="P:regulation of glutamine family amino acid metabolic process"/>
    <property type="evidence" value="ECO:0007669"/>
    <property type="project" value="UniProtKB-UniRule"/>
</dbReference>
<dbReference type="CDD" id="cd05401">
    <property type="entry name" value="NT_GlnE_GlnD_like"/>
    <property type="match status" value="2"/>
</dbReference>
<dbReference type="FunFam" id="1.10.4050.10:FF:000001">
    <property type="entry name" value="Bifunctional glutamine synthetase adenylyltransferase/adenylyl-removing enzyme"/>
    <property type="match status" value="1"/>
</dbReference>
<dbReference type="FunFam" id="1.20.120.1510:FF:000001">
    <property type="entry name" value="Bifunctional glutamine synthetase adenylyltransferase/adenylyl-removing enzyme"/>
    <property type="match status" value="1"/>
</dbReference>
<dbReference type="FunFam" id="1.20.120.330:FF:000005">
    <property type="entry name" value="Bifunctional glutamine synthetase adenylyltransferase/adenylyl-removing enzyme"/>
    <property type="match status" value="1"/>
</dbReference>
<dbReference type="FunFam" id="1.20.120.330:FF:000008">
    <property type="entry name" value="Bifunctional glutamine synthetase adenylyltransferase/adenylyl-removing enzyme"/>
    <property type="match status" value="1"/>
</dbReference>
<dbReference type="FunFam" id="3.30.460.10:FF:000009">
    <property type="entry name" value="Bifunctional glutamine synthetase adenylyltransferase/adenylyl-removing enzyme"/>
    <property type="match status" value="1"/>
</dbReference>
<dbReference type="FunFam" id="3.30.460.10:FF:000014">
    <property type="entry name" value="Bifunctional glutamine synthetase adenylyltransferase/adenylyl-removing enzyme"/>
    <property type="match status" value="1"/>
</dbReference>
<dbReference type="Gene3D" id="1.20.120.1510">
    <property type="match status" value="1"/>
</dbReference>
<dbReference type="Gene3D" id="3.30.460.10">
    <property type="entry name" value="Beta Polymerase, domain 2"/>
    <property type="match status" value="2"/>
</dbReference>
<dbReference type="Gene3D" id="1.10.4050.10">
    <property type="entry name" value="Glutamine synthase adenylyltransferase GlnE"/>
    <property type="match status" value="1"/>
</dbReference>
<dbReference type="Gene3D" id="1.20.120.330">
    <property type="entry name" value="Nucleotidyltransferases domain 2"/>
    <property type="match status" value="2"/>
</dbReference>
<dbReference type="HAMAP" id="MF_00802">
    <property type="entry name" value="GlnE"/>
    <property type="match status" value="1"/>
</dbReference>
<dbReference type="InterPro" id="IPR023057">
    <property type="entry name" value="GlnE"/>
</dbReference>
<dbReference type="InterPro" id="IPR005190">
    <property type="entry name" value="GlnE_rpt_dom"/>
</dbReference>
<dbReference type="InterPro" id="IPR043519">
    <property type="entry name" value="NT_sf"/>
</dbReference>
<dbReference type="InterPro" id="IPR013546">
    <property type="entry name" value="PII_UdlTrfase/GS_AdlTrfase"/>
</dbReference>
<dbReference type="NCBIfam" id="NF008292">
    <property type="entry name" value="PRK11072.1"/>
    <property type="match status" value="1"/>
</dbReference>
<dbReference type="PANTHER" id="PTHR30621:SF0">
    <property type="entry name" value="BIFUNCTIONAL GLUTAMINE SYNTHETASE ADENYLYLTRANSFERASE_ADENYLYL-REMOVING ENZYME"/>
    <property type="match status" value="1"/>
</dbReference>
<dbReference type="PANTHER" id="PTHR30621">
    <property type="entry name" value="GLUTAMINE SYNTHETASE ADENYLYLTRANSFERASE"/>
    <property type="match status" value="1"/>
</dbReference>
<dbReference type="Pfam" id="PF08335">
    <property type="entry name" value="GlnD_UR_UTase"/>
    <property type="match status" value="2"/>
</dbReference>
<dbReference type="Pfam" id="PF03710">
    <property type="entry name" value="GlnE"/>
    <property type="match status" value="2"/>
</dbReference>
<dbReference type="SUPFAM" id="SSF81301">
    <property type="entry name" value="Nucleotidyltransferase"/>
    <property type="match status" value="2"/>
</dbReference>
<dbReference type="SUPFAM" id="SSF81593">
    <property type="entry name" value="Nucleotidyltransferase substrate binding subunit/domain"/>
    <property type="match status" value="2"/>
</dbReference>
<keyword id="KW-0067">ATP-binding</keyword>
<keyword id="KW-0460">Magnesium</keyword>
<keyword id="KW-0511">Multifunctional enzyme</keyword>
<keyword id="KW-0547">Nucleotide-binding</keyword>
<keyword id="KW-0548">Nucleotidyltransferase</keyword>
<keyword id="KW-0808">Transferase</keyword>
<name>GLNE_ECODH</name>
<accession>B1XG58</accession>